<accession>A1R6L8</accession>
<evidence type="ECO:0000255" key="1">
    <source>
        <dbReference type="HAMAP-Rule" id="MF_00624"/>
    </source>
</evidence>
<proteinExistence type="inferred from homology"/>
<keyword id="KW-0067">ATP-binding</keyword>
<keyword id="KW-0119">Carbohydrate metabolism</keyword>
<keyword id="KW-0320">Glycogen biosynthesis</keyword>
<keyword id="KW-0321">Glycogen metabolism</keyword>
<keyword id="KW-0547">Nucleotide-binding</keyword>
<keyword id="KW-0548">Nucleotidyltransferase</keyword>
<keyword id="KW-0808">Transferase</keyword>
<protein>
    <recommendedName>
        <fullName evidence="1">Glucose-1-phosphate adenylyltransferase</fullName>
        <ecNumber evidence="1">2.7.7.27</ecNumber>
    </recommendedName>
    <alternativeName>
        <fullName evidence="1">ADP-glucose pyrophosphorylase</fullName>
        <shortName evidence="1">ADPGlc PPase</shortName>
    </alternativeName>
    <alternativeName>
        <fullName evidence="1">ADP-glucose synthase</fullName>
    </alternativeName>
</protein>
<gene>
    <name evidence="1" type="primary">glgC</name>
    <name type="ordered locus">AAur_2136</name>
</gene>
<feature type="chain" id="PRO_1000051556" description="Glucose-1-phosphate adenylyltransferase">
    <location>
        <begin position="1"/>
        <end position="470"/>
    </location>
</feature>
<feature type="binding site" evidence="1">
    <location>
        <position position="165"/>
    </location>
    <ligand>
        <name>alpha-D-glucose 1-phosphate</name>
        <dbReference type="ChEBI" id="CHEBI:58601"/>
    </ligand>
</feature>
<feature type="binding site" evidence="1">
    <location>
        <begin position="182"/>
        <end position="183"/>
    </location>
    <ligand>
        <name>alpha-D-glucose 1-phosphate</name>
        <dbReference type="ChEBI" id="CHEBI:58601"/>
    </ligand>
</feature>
<feature type="binding site" evidence="1">
    <location>
        <position position="200"/>
    </location>
    <ligand>
        <name>alpha-D-glucose 1-phosphate</name>
        <dbReference type="ChEBI" id="CHEBI:58601"/>
    </ligand>
</feature>
<sequence>MTMALKKVLAIVLAGGEGNRLMPLTADRAKPAVPFAGGYRLIDFALSNLVNSGYLKIVVLTQYKSHSLDRHISETWRMSTQLGRYVASVPAQQRVGKSWFLGSANAIYQSLNLIHDDAPDIVVVVGADHVYRMDFSQMVEQHIASGAKATVAAVRQPLNMANQFGVIEVDQNDPQKIAAFVEKPASTPGLAADPTQFLASMGNYVFNADALVEALHVDAERLDTKHDMGGDIIPYFVDQGEAGVYDFTLNDIPGATERDRTYWRDVGTIDSFYDAHMDLISPVPIFNLYNSEWPIYTRQSISPPAKFVRGENNTVGTALDSIVASGVVVSGGIVEGSVLSNDAYVAAGSRVQDSVLMDKVRVGEGAVIKRAILDKNVKVPAGAAIGLDPALDKARGYKVTESGITVLAKGQVVPEPGEAELALSAQHRRGLPEAVKAATHDDPDIRDSAEKVAAGIQSRVADAAAQGAAH</sequence>
<comment type="function">
    <text evidence="1">Involved in the biosynthesis of ADP-glucose, a building block required for the elongation reactions to produce glycogen. Catalyzes the reaction between ATP and alpha-D-glucose 1-phosphate (G1P) to produce pyrophosphate and ADP-Glc.</text>
</comment>
<comment type="catalytic activity">
    <reaction evidence="1">
        <text>alpha-D-glucose 1-phosphate + ATP + H(+) = ADP-alpha-D-glucose + diphosphate</text>
        <dbReference type="Rhea" id="RHEA:12120"/>
        <dbReference type="ChEBI" id="CHEBI:15378"/>
        <dbReference type="ChEBI" id="CHEBI:30616"/>
        <dbReference type="ChEBI" id="CHEBI:33019"/>
        <dbReference type="ChEBI" id="CHEBI:57498"/>
        <dbReference type="ChEBI" id="CHEBI:58601"/>
        <dbReference type="EC" id="2.7.7.27"/>
    </reaction>
</comment>
<comment type="pathway">
    <text evidence="1">Glycan biosynthesis; glycogen biosynthesis.</text>
</comment>
<comment type="subunit">
    <text evidence="1">Homotetramer.</text>
</comment>
<comment type="similarity">
    <text evidence="1">Belongs to the bacterial/plant glucose-1-phosphate adenylyltransferase family.</text>
</comment>
<organism>
    <name type="scientific">Paenarthrobacter aurescens (strain TC1)</name>
    <dbReference type="NCBI Taxonomy" id="290340"/>
    <lineage>
        <taxon>Bacteria</taxon>
        <taxon>Bacillati</taxon>
        <taxon>Actinomycetota</taxon>
        <taxon>Actinomycetes</taxon>
        <taxon>Micrococcales</taxon>
        <taxon>Micrococcaceae</taxon>
        <taxon>Paenarthrobacter</taxon>
    </lineage>
</organism>
<name>GLGC_PAEAT</name>
<dbReference type="EC" id="2.7.7.27" evidence="1"/>
<dbReference type="EMBL" id="CP000474">
    <property type="protein sequence ID" value="ABM08641.1"/>
    <property type="molecule type" value="Genomic_DNA"/>
</dbReference>
<dbReference type="SMR" id="A1R6L8"/>
<dbReference type="STRING" id="290340.AAur_2136"/>
<dbReference type="KEGG" id="aau:AAur_2136"/>
<dbReference type="eggNOG" id="COG0448">
    <property type="taxonomic scope" value="Bacteria"/>
</dbReference>
<dbReference type="HOGENOM" id="CLU_029499_14_1_11"/>
<dbReference type="UniPathway" id="UPA00164"/>
<dbReference type="Proteomes" id="UP000000637">
    <property type="component" value="Chromosome"/>
</dbReference>
<dbReference type="GO" id="GO:0005524">
    <property type="term" value="F:ATP binding"/>
    <property type="evidence" value="ECO:0007669"/>
    <property type="project" value="UniProtKB-KW"/>
</dbReference>
<dbReference type="GO" id="GO:0008878">
    <property type="term" value="F:glucose-1-phosphate adenylyltransferase activity"/>
    <property type="evidence" value="ECO:0007669"/>
    <property type="project" value="UniProtKB-UniRule"/>
</dbReference>
<dbReference type="GO" id="GO:0005978">
    <property type="term" value="P:glycogen biosynthetic process"/>
    <property type="evidence" value="ECO:0007669"/>
    <property type="project" value="UniProtKB-UniRule"/>
</dbReference>
<dbReference type="CDD" id="cd02508">
    <property type="entry name" value="ADP_Glucose_PP"/>
    <property type="match status" value="1"/>
</dbReference>
<dbReference type="CDD" id="cd04651">
    <property type="entry name" value="LbH_G1P_AT_C"/>
    <property type="match status" value="1"/>
</dbReference>
<dbReference type="Gene3D" id="2.160.10.10">
    <property type="entry name" value="Hexapeptide repeat proteins"/>
    <property type="match status" value="1"/>
</dbReference>
<dbReference type="Gene3D" id="3.90.550.10">
    <property type="entry name" value="Spore Coat Polysaccharide Biosynthesis Protein SpsA, Chain A"/>
    <property type="match status" value="1"/>
</dbReference>
<dbReference type="HAMAP" id="MF_00624">
    <property type="entry name" value="GlgC"/>
    <property type="match status" value="1"/>
</dbReference>
<dbReference type="InterPro" id="IPR011831">
    <property type="entry name" value="ADP-Glc_PPase"/>
</dbReference>
<dbReference type="InterPro" id="IPR005836">
    <property type="entry name" value="ADP_Glu_pyroP_CS"/>
</dbReference>
<dbReference type="InterPro" id="IPR023049">
    <property type="entry name" value="GlgC_bac"/>
</dbReference>
<dbReference type="InterPro" id="IPR056818">
    <property type="entry name" value="GlmU/GlgC-like_hexapep"/>
</dbReference>
<dbReference type="InterPro" id="IPR005835">
    <property type="entry name" value="NTP_transferase_dom"/>
</dbReference>
<dbReference type="InterPro" id="IPR029044">
    <property type="entry name" value="Nucleotide-diphossugar_trans"/>
</dbReference>
<dbReference type="InterPro" id="IPR011004">
    <property type="entry name" value="Trimer_LpxA-like_sf"/>
</dbReference>
<dbReference type="NCBIfam" id="TIGR02091">
    <property type="entry name" value="glgC"/>
    <property type="match status" value="1"/>
</dbReference>
<dbReference type="NCBIfam" id="NF001947">
    <property type="entry name" value="PRK00725.1"/>
    <property type="match status" value="1"/>
</dbReference>
<dbReference type="NCBIfam" id="NF002023">
    <property type="entry name" value="PRK00844.1"/>
    <property type="match status" value="1"/>
</dbReference>
<dbReference type="PANTHER" id="PTHR43523:SF2">
    <property type="entry name" value="GLUCOSE-1-PHOSPHATE ADENYLYLTRANSFERASE"/>
    <property type="match status" value="1"/>
</dbReference>
<dbReference type="PANTHER" id="PTHR43523">
    <property type="entry name" value="GLUCOSE-1-PHOSPHATE ADENYLYLTRANSFERASE-RELATED"/>
    <property type="match status" value="1"/>
</dbReference>
<dbReference type="Pfam" id="PF24894">
    <property type="entry name" value="Hexapep_GlmU"/>
    <property type="match status" value="1"/>
</dbReference>
<dbReference type="Pfam" id="PF00483">
    <property type="entry name" value="NTP_transferase"/>
    <property type="match status" value="1"/>
</dbReference>
<dbReference type="SUPFAM" id="SSF53448">
    <property type="entry name" value="Nucleotide-diphospho-sugar transferases"/>
    <property type="match status" value="1"/>
</dbReference>
<dbReference type="SUPFAM" id="SSF51161">
    <property type="entry name" value="Trimeric LpxA-like enzymes"/>
    <property type="match status" value="1"/>
</dbReference>
<dbReference type="PROSITE" id="PS00809">
    <property type="entry name" value="ADP_GLC_PYROPHOSPH_2"/>
    <property type="match status" value="1"/>
</dbReference>
<dbReference type="PROSITE" id="PS00810">
    <property type="entry name" value="ADP_GLC_PYROPHOSPH_3"/>
    <property type="match status" value="1"/>
</dbReference>
<reference key="1">
    <citation type="journal article" date="2006" name="PLoS Genet.">
        <title>Secrets of soil survival revealed by the genome sequence of Arthrobacter aurescens TC1.</title>
        <authorList>
            <person name="Mongodin E.F."/>
            <person name="Shapir N."/>
            <person name="Daugherty S.C."/>
            <person name="DeBoy R.T."/>
            <person name="Emerson J.B."/>
            <person name="Shvartzbeyn A."/>
            <person name="Radune D."/>
            <person name="Vamathevan J."/>
            <person name="Riggs F."/>
            <person name="Grinberg V."/>
            <person name="Khouri H.M."/>
            <person name="Wackett L.P."/>
            <person name="Nelson K.E."/>
            <person name="Sadowsky M.J."/>
        </authorList>
    </citation>
    <scope>NUCLEOTIDE SEQUENCE [LARGE SCALE GENOMIC DNA]</scope>
    <source>
        <strain>TC1</strain>
    </source>
</reference>